<sequence length="205" mass="22320">MTNIVWHQHPVDQAARAEQKGQNPVLLWFTGLSGAGKSTLAGALERALFEAGFHTYLLDGDNVRHGLCKDLGFTVEDRDENLRRVGEVAKLMVDAGLVVLSAFISPTREERDSIRARFPASQFIEVHVSTPLSVCEQRDPKGLYVKARSGEISNFTGISSPYEAPLAAELTIDTSKGDLATQVRALIDYLTAINVINADKAKALA</sequence>
<accession>B8EE63</accession>
<keyword id="KW-0067">ATP-binding</keyword>
<keyword id="KW-0418">Kinase</keyword>
<keyword id="KW-0547">Nucleotide-binding</keyword>
<keyword id="KW-0597">Phosphoprotein</keyword>
<keyword id="KW-0808">Transferase</keyword>
<gene>
    <name evidence="1" type="primary">cysC</name>
    <name type="ordered locus">Sbal223_0957</name>
</gene>
<protein>
    <recommendedName>
        <fullName evidence="1">Adenylyl-sulfate kinase</fullName>
        <ecNumber evidence="1">2.7.1.25</ecNumber>
    </recommendedName>
    <alternativeName>
        <fullName evidence="1">APS kinase</fullName>
    </alternativeName>
    <alternativeName>
        <fullName evidence="1">ATP adenosine-5'-phosphosulfate 3'-phosphotransferase</fullName>
    </alternativeName>
    <alternativeName>
        <fullName evidence="1">Adenosine-5'-phosphosulfate kinase</fullName>
    </alternativeName>
</protein>
<name>CYSC_SHEB2</name>
<reference key="1">
    <citation type="submission" date="2008-12" db="EMBL/GenBank/DDBJ databases">
        <title>Complete sequence of chromosome of Shewanella baltica OS223.</title>
        <authorList>
            <consortium name="US DOE Joint Genome Institute"/>
            <person name="Lucas S."/>
            <person name="Copeland A."/>
            <person name="Lapidus A."/>
            <person name="Glavina del Rio T."/>
            <person name="Dalin E."/>
            <person name="Tice H."/>
            <person name="Bruce D."/>
            <person name="Goodwin L."/>
            <person name="Pitluck S."/>
            <person name="Chertkov O."/>
            <person name="Meincke L."/>
            <person name="Brettin T."/>
            <person name="Detter J.C."/>
            <person name="Han C."/>
            <person name="Kuske C.R."/>
            <person name="Larimer F."/>
            <person name="Land M."/>
            <person name="Hauser L."/>
            <person name="Kyrpides N."/>
            <person name="Ovchinnikova G."/>
            <person name="Brettar I."/>
            <person name="Rodrigues J."/>
            <person name="Konstantinidis K."/>
            <person name="Tiedje J."/>
        </authorList>
    </citation>
    <scope>NUCLEOTIDE SEQUENCE [LARGE SCALE GENOMIC DNA]</scope>
    <source>
        <strain>OS223</strain>
    </source>
</reference>
<comment type="function">
    <text evidence="1">Catalyzes the synthesis of activated sulfate.</text>
</comment>
<comment type="catalytic activity">
    <reaction evidence="1">
        <text>adenosine 5'-phosphosulfate + ATP = 3'-phosphoadenylyl sulfate + ADP + H(+)</text>
        <dbReference type="Rhea" id="RHEA:24152"/>
        <dbReference type="ChEBI" id="CHEBI:15378"/>
        <dbReference type="ChEBI" id="CHEBI:30616"/>
        <dbReference type="ChEBI" id="CHEBI:58243"/>
        <dbReference type="ChEBI" id="CHEBI:58339"/>
        <dbReference type="ChEBI" id="CHEBI:456216"/>
        <dbReference type="EC" id="2.7.1.25"/>
    </reaction>
</comment>
<comment type="pathway">
    <text evidence="1">Sulfur metabolism; hydrogen sulfide biosynthesis; sulfite from sulfate: step 2/3.</text>
</comment>
<comment type="similarity">
    <text evidence="1">Belongs to the APS kinase family.</text>
</comment>
<feature type="chain" id="PRO_1000117957" description="Adenylyl-sulfate kinase">
    <location>
        <begin position="1"/>
        <end position="205"/>
    </location>
</feature>
<feature type="active site" description="Phosphoserine intermediate" evidence="1">
    <location>
        <position position="105"/>
    </location>
</feature>
<feature type="binding site" evidence="1">
    <location>
        <begin position="31"/>
        <end position="38"/>
    </location>
    <ligand>
        <name>ATP</name>
        <dbReference type="ChEBI" id="CHEBI:30616"/>
    </ligand>
</feature>
<proteinExistence type="inferred from homology"/>
<organism>
    <name type="scientific">Shewanella baltica (strain OS223)</name>
    <dbReference type="NCBI Taxonomy" id="407976"/>
    <lineage>
        <taxon>Bacteria</taxon>
        <taxon>Pseudomonadati</taxon>
        <taxon>Pseudomonadota</taxon>
        <taxon>Gammaproteobacteria</taxon>
        <taxon>Alteromonadales</taxon>
        <taxon>Shewanellaceae</taxon>
        <taxon>Shewanella</taxon>
    </lineage>
</organism>
<evidence type="ECO:0000255" key="1">
    <source>
        <dbReference type="HAMAP-Rule" id="MF_00065"/>
    </source>
</evidence>
<dbReference type="EC" id="2.7.1.25" evidence="1"/>
<dbReference type="EMBL" id="CP001252">
    <property type="protein sequence ID" value="ACK45475.1"/>
    <property type="molecule type" value="Genomic_DNA"/>
</dbReference>
<dbReference type="RefSeq" id="WP_006082881.1">
    <property type="nucleotide sequence ID" value="NC_011663.1"/>
</dbReference>
<dbReference type="SMR" id="B8EE63"/>
<dbReference type="KEGG" id="sbp:Sbal223_0957"/>
<dbReference type="HOGENOM" id="CLU_046932_1_0_6"/>
<dbReference type="UniPathway" id="UPA00140">
    <property type="reaction ID" value="UER00205"/>
</dbReference>
<dbReference type="Proteomes" id="UP000002507">
    <property type="component" value="Chromosome"/>
</dbReference>
<dbReference type="GO" id="GO:0004020">
    <property type="term" value="F:adenylylsulfate kinase activity"/>
    <property type="evidence" value="ECO:0007669"/>
    <property type="project" value="UniProtKB-UniRule"/>
</dbReference>
<dbReference type="GO" id="GO:0005524">
    <property type="term" value="F:ATP binding"/>
    <property type="evidence" value="ECO:0007669"/>
    <property type="project" value="UniProtKB-UniRule"/>
</dbReference>
<dbReference type="GO" id="GO:0070814">
    <property type="term" value="P:hydrogen sulfide biosynthetic process"/>
    <property type="evidence" value="ECO:0007669"/>
    <property type="project" value="UniProtKB-UniRule"/>
</dbReference>
<dbReference type="GO" id="GO:0000103">
    <property type="term" value="P:sulfate assimilation"/>
    <property type="evidence" value="ECO:0007669"/>
    <property type="project" value="UniProtKB-UniRule"/>
</dbReference>
<dbReference type="CDD" id="cd02027">
    <property type="entry name" value="APSK"/>
    <property type="match status" value="1"/>
</dbReference>
<dbReference type="FunFam" id="3.40.50.300:FF:000212">
    <property type="entry name" value="Adenylyl-sulfate kinase"/>
    <property type="match status" value="1"/>
</dbReference>
<dbReference type="Gene3D" id="3.40.50.300">
    <property type="entry name" value="P-loop containing nucleotide triphosphate hydrolases"/>
    <property type="match status" value="1"/>
</dbReference>
<dbReference type="HAMAP" id="MF_00065">
    <property type="entry name" value="Adenylyl_sulf_kinase"/>
    <property type="match status" value="1"/>
</dbReference>
<dbReference type="InterPro" id="IPR002891">
    <property type="entry name" value="APS_kinase"/>
</dbReference>
<dbReference type="InterPro" id="IPR027417">
    <property type="entry name" value="P-loop_NTPase"/>
</dbReference>
<dbReference type="NCBIfam" id="TIGR00455">
    <property type="entry name" value="apsK"/>
    <property type="match status" value="1"/>
</dbReference>
<dbReference type="NCBIfam" id="NF003013">
    <property type="entry name" value="PRK03846.1"/>
    <property type="match status" value="1"/>
</dbReference>
<dbReference type="PANTHER" id="PTHR11055:SF63">
    <property type="entry name" value="ADENYLYL-SULFATE KINASE 1, CHLOROPLASTIC"/>
    <property type="match status" value="1"/>
</dbReference>
<dbReference type="PANTHER" id="PTHR11055">
    <property type="entry name" value="BIFUNCTIONAL 3'-PHOSPHOADENOSINE 5'-PHOSPHOSULFATE SYNTHASE"/>
    <property type="match status" value="1"/>
</dbReference>
<dbReference type="Pfam" id="PF01583">
    <property type="entry name" value="APS_kinase"/>
    <property type="match status" value="1"/>
</dbReference>
<dbReference type="SUPFAM" id="SSF52540">
    <property type="entry name" value="P-loop containing nucleoside triphosphate hydrolases"/>
    <property type="match status" value="1"/>
</dbReference>